<dbReference type="EMBL" id="CP000125">
    <property type="protein sequence ID" value="ABA51853.1"/>
    <property type="molecule type" value="Genomic_DNA"/>
</dbReference>
<dbReference type="RefSeq" id="WP_004528816.1">
    <property type="nucleotide sequence ID" value="NC_007435.1"/>
</dbReference>
<dbReference type="EnsemblBacteria" id="ABA51853">
    <property type="protein sequence ID" value="ABA51853"/>
    <property type="gene ID" value="BURPS1710b_A0570"/>
</dbReference>
<dbReference type="KEGG" id="bpm:BURPS1710b_A0570"/>
<dbReference type="HOGENOM" id="CLU_661703_0_0_4"/>
<dbReference type="Proteomes" id="UP000002700">
    <property type="component" value="Chromosome II"/>
</dbReference>
<dbReference type="GO" id="GO:0005576">
    <property type="term" value="C:extracellular region"/>
    <property type="evidence" value="ECO:0007669"/>
    <property type="project" value="UniProtKB-SubCell"/>
</dbReference>
<dbReference type="InterPro" id="IPR005427">
    <property type="entry name" value="BipC/SctB"/>
</dbReference>
<dbReference type="NCBIfam" id="TIGR02101">
    <property type="entry name" value="IpaC_SipC"/>
    <property type="match status" value="1"/>
</dbReference>
<dbReference type="Pfam" id="PF09599">
    <property type="entry name" value="IpaC_SipC"/>
    <property type="match status" value="1"/>
</dbReference>
<dbReference type="PRINTS" id="PR01608">
    <property type="entry name" value="BACINVASINC"/>
</dbReference>
<feature type="chain" id="PRO_0000343999" description="Effector protein BipC">
    <location>
        <begin position="1"/>
        <end position="419"/>
    </location>
</feature>
<feature type="region of interest" description="Disordered" evidence="2">
    <location>
        <begin position="62"/>
        <end position="94"/>
    </location>
</feature>
<feature type="region of interest" description="Disordered" evidence="2">
    <location>
        <begin position="338"/>
        <end position="402"/>
    </location>
</feature>
<feature type="compositionally biased region" description="Basic and acidic residues" evidence="2">
    <location>
        <begin position="71"/>
        <end position="94"/>
    </location>
</feature>
<feature type="compositionally biased region" description="Basic and acidic residues" evidence="2">
    <location>
        <begin position="380"/>
        <end position="392"/>
    </location>
</feature>
<name>BIPC_BURP1</name>
<organism>
    <name type="scientific">Burkholderia pseudomallei (strain 1710b)</name>
    <dbReference type="NCBI Taxonomy" id="320372"/>
    <lineage>
        <taxon>Bacteria</taxon>
        <taxon>Pseudomonadati</taxon>
        <taxon>Pseudomonadota</taxon>
        <taxon>Betaproteobacteria</taxon>
        <taxon>Burkholderiales</taxon>
        <taxon>Burkholderiaceae</taxon>
        <taxon>Burkholderia</taxon>
        <taxon>pseudomallei group</taxon>
    </lineage>
</organism>
<reference key="1">
    <citation type="journal article" date="2010" name="Genome Biol. Evol.">
        <title>Continuing evolution of Burkholderia mallei through genome reduction and large-scale rearrangements.</title>
        <authorList>
            <person name="Losada L."/>
            <person name="Ronning C.M."/>
            <person name="DeShazer D."/>
            <person name="Woods D."/>
            <person name="Fedorova N."/>
            <person name="Kim H.S."/>
            <person name="Shabalina S.A."/>
            <person name="Pearson T.R."/>
            <person name="Brinkac L."/>
            <person name="Tan P."/>
            <person name="Nandi T."/>
            <person name="Crabtree J."/>
            <person name="Badger J."/>
            <person name="Beckstrom-Sternberg S."/>
            <person name="Saqib M."/>
            <person name="Schutzer S.E."/>
            <person name="Keim P."/>
            <person name="Nierman W.C."/>
        </authorList>
    </citation>
    <scope>NUCLEOTIDE SEQUENCE [LARGE SCALE GENOMIC DNA]</scope>
    <source>
        <strain>1710b</strain>
    </source>
</reference>
<evidence type="ECO:0000250" key="1"/>
<evidence type="ECO:0000256" key="2">
    <source>
        <dbReference type="SAM" id="MobiDB-lite"/>
    </source>
</evidence>
<evidence type="ECO:0000305" key="3"/>
<accession>Q3JL24</accession>
<keyword id="KW-0964">Secreted</keyword>
<keyword id="KW-0843">Virulence</keyword>
<comment type="subcellular location">
    <subcellularLocation>
        <location evidence="1">Secreted</location>
    </subcellularLocation>
    <text evidence="1">Secreted via the bsa type III secretion system.</text>
</comment>
<comment type="similarity">
    <text evidence="3">Belongs to the SctB/SipC family.</text>
</comment>
<gene>
    <name type="primary">bipC</name>
    <name type="ordered locus">BURPS1710b_A0570</name>
</gene>
<protein>
    <recommendedName>
        <fullName>Effector protein BipC</fullName>
    </recommendedName>
</protein>
<sequence>MSIGVQSSGINISHAELSRLVDAGKSEQGDKAVRDGGRALARADAALAAVVGERVAARRDAVAGSGAQRVELARPKPDAQTRATDRRTVSGLEREHKRLAASQTPRVTGMHDALVQRHVSLDGAKAAHGEGVKRAAGDAPRAAADAPQRFAFADDKAFDAMLALGAAMQKNVQSDLAMQGKLTMLAHDAMMSAAAQDRSIGAAQMTAAIAGGALQATTSLGGAMQQMKSLSTKSMSIEKELKPQAELKQFHAEQALELRGINKPVLSNDEVSHVKIKRDTGETVRHEIDHGGERMSDEHASVLAQEAPARQHRIDMHGMRHEENLVKAGRQQMKGDLLQSGGQIGKNQIDGASAQQQGADRAEQKEDENAQQTAMAAASTRDEAAHRSREAAQKAIDAAKSQVANDNAVAAQVAGNLRT</sequence>
<proteinExistence type="inferred from homology"/>